<sequence>MSNESKCPFHQTAGGGTTNRDWWPDQLNLRILHQHGTKSDPMDPDFDYAKAFKSLDFQALKQDLTALMTDSQDWWPADFGHYGPLFIRMAWHSAGTYRIGDGRGGAGSGQQRFAPLNSWPDNVSLDKARRLLWPIKQKYGNKISWADLIVLTGNVALESMGFKTFGFSGGRADVWEPDEDVYWGSEKVWLGGDTRYGKDQVKAQAPGQGDLVAEPAKHGEEQNRDLSAERNLENPLAAVQMGLIYVNPEGPEGNPDPVASGKDIRETFGRMAMNDEETVALIAGGHAFGKTHGAGPADNVGAEPEAAGLELQGLGWANKFGTGKGGDTITSGLEVTWTSTPTQWSNEYLNNLFNFEWELTKSPAGAHQWQPKEGKGAGTVPDAHDPSKRHAPSMLTSDLALRFDPIYEPIARRFKDNPDQLADAFARAWYKLIHRDMGPLARYLGPEMPNEELLWQDPLPKADQPLPSEQDIAALKTKVLASGLSVGELVSTAWAAASTFRGSDKRGGANGARLRLAPQKDWPANQGTGKVLAALEQIQGEFNNGGKHISLADLIVLAGTAAVEKAAKDAGYAGNVQFRPGRVDASQEQTDVESFAVLEPLADGFRNFTKARYSVKAEKLLLDKAQLLTLTAPELTVLIGGLRVLGANHGGSKHGVFTDQPGTLSNDFFRNLLDMGVEWKATSGDNESFEGRDRKTGQVKWTGTRVDLVFGSHAQLRALSEVYGSSDGKDKFVKDFVAAWVKVMELDRFDLK</sequence>
<comment type="function">
    <text evidence="1">Bifunctional enzyme with both catalase and broad-spectrum peroxidase activity.</text>
</comment>
<comment type="catalytic activity">
    <reaction evidence="1">
        <text>H2O2 + AH2 = A + 2 H2O</text>
        <dbReference type="Rhea" id="RHEA:30275"/>
        <dbReference type="ChEBI" id="CHEBI:13193"/>
        <dbReference type="ChEBI" id="CHEBI:15377"/>
        <dbReference type="ChEBI" id="CHEBI:16240"/>
        <dbReference type="ChEBI" id="CHEBI:17499"/>
        <dbReference type="EC" id="1.11.1.21"/>
    </reaction>
</comment>
<comment type="catalytic activity">
    <reaction evidence="1">
        <text>2 H2O2 = O2 + 2 H2O</text>
        <dbReference type="Rhea" id="RHEA:20309"/>
        <dbReference type="ChEBI" id="CHEBI:15377"/>
        <dbReference type="ChEBI" id="CHEBI:15379"/>
        <dbReference type="ChEBI" id="CHEBI:16240"/>
        <dbReference type="EC" id="1.11.1.21"/>
    </reaction>
</comment>
<comment type="cofactor">
    <cofactor evidence="1">
        <name>heme b</name>
        <dbReference type="ChEBI" id="CHEBI:60344"/>
    </cofactor>
    <text evidence="1">Binds 1 heme b (iron(II)-protoporphyrin IX) group per dimer.</text>
</comment>
<comment type="subunit">
    <text evidence="1">Homodimer or homotetramer.</text>
</comment>
<comment type="PTM">
    <text evidence="1">Formation of the three residue Trp-Tyr-Met cross-link is important for the catalase, but not the peroxidase activity of the enzyme.</text>
</comment>
<comment type="similarity">
    <text evidence="1">Belongs to the peroxidase family. Peroxidase/catalase subfamily.</text>
</comment>
<protein>
    <recommendedName>
        <fullName evidence="1">Catalase-peroxidase</fullName>
        <shortName evidence="1">CP</shortName>
        <ecNumber evidence="1">1.11.1.21</ecNumber>
    </recommendedName>
    <alternativeName>
        <fullName evidence="1">Peroxidase/catalase</fullName>
    </alternativeName>
</protein>
<proteinExistence type="inferred from homology"/>
<organism>
    <name type="scientific">Pseudomonas putida (strain W619)</name>
    <dbReference type="NCBI Taxonomy" id="390235"/>
    <lineage>
        <taxon>Bacteria</taxon>
        <taxon>Pseudomonadati</taxon>
        <taxon>Pseudomonadota</taxon>
        <taxon>Gammaproteobacteria</taxon>
        <taxon>Pseudomonadales</taxon>
        <taxon>Pseudomonadaceae</taxon>
        <taxon>Pseudomonas</taxon>
    </lineage>
</organism>
<dbReference type="EC" id="1.11.1.21" evidence="1"/>
<dbReference type="EMBL" id="CP000949">
    <property type="protein sequence ID" value="ACA72735.1"/>
    <property type="molecule type" value="Genomic_DNA"/>
</dbReference>
<dbReference type="SMR" id="B1J7Q1"/>
<dbReference type="STRING" id="390235.PputW619_2235"/>
<dbReference type="KEGG" id="ppw:PputW619_2235"/>
<dbReference type="eggNOG" id="COG0376">
    <property type="taxonomic scope" value="Bacteria"/>
</dbReference>
<dbReference type="HOGENOM" id="CLU_025424_2_0_6"/>
<dbReference type="OrthoDB" id="9759743at2"/>
<dbReference type="GO" id="GO:0005829">
    <property type="term" value="C:cytosol"/>
    <property type="evidence" value="ECO:0007669"/>
    <property type="project" value="TreeGrafter"/>
</dbReference>
<dbReference type="GO" id="GO:0004096">
    <property type="term" value="F:catalase activity"/>
    <property type="evidence" value="ECO:0007669"/>
    <property type="project" value="UniProtKB-UniRule"/>
</dbReference>
<dbReference type="GO" id="GO:0020037">
    <property type="term" value="F:heme binding"/>
    <property type="evidence" value="ECO:0007669"/>
    <property type="project" value="InterPro"/>
</dbReference>
<dbReference type="GO" id="GO:0046872">
    <property type="term" value="F:metal ion binding"/>
    <property type="evidence" value="ECO:0007669"/>
    <property type="project" value="UniProtKB-KW"/>
</dbReference>
<dbReference type="GO" id="GO:0070301">
    <property type="term" value="P:cellular response to hydrogen peroxide"/>
    <property type="evidence" value="ECO:0007669"/>
    <property type="project" value="TreeGrafter"/>
</dbReference>
<dbReference type="GO" id="GO:0042744">
    <property type="term" value="P:hydrogen peroxide catabolic process"/>
    <property type="evidence" value="ECO:0007669"/>
    <property type="project" value="UniProtKB-KW"/>
</dbReference>
<dbReference type="CDD" id="cd00649">
    <property type="entry name" value="catalase_peroxidase_1"/>
    <property type="match status" value="1"/>
</dbReference>
<dbReference type="CDD" id="cd08200">
    <property type="entry name" value="catalase_peroxidase_2"/>
    <property type="match status" value="1"/>
</dbReference>
<dbReference type="FunFam" id="1.10.420.10:FF:000004">
    <property type="entry name" value="Catalase-peroxidase"/>
    <property type="match status" value="1"/>
</dbReference>
<dbReference type="FunFam" id="1.10.520.10:FF:000002">
    <property type="entry name" value="Catalase-peroxidase"/>
    <property type="match status" value="1"/>
</dbReference>
<dbReference type="Gene3D" id="1.10.520.10">
    <property type="match status" value="2"/>
</dbReference>
<dbReference type="Gene3D" id="1.10.420.10">
    <property type="entry name" value="Peroxidase, domain 2"/>
    <property type="match status" value="2"/>
</dbReference>
<dbReference type="HAMAP" id="MF_01961">
    <property type="entry name" value="Catal_peroxid"/>
    <property type="match status" value="1"/>
</dbReference>
<dbReference type="InterPro" id="IPR000763">
    <property type="entry name" value="Catalase_peroxidase"/>
</dbReference>
<dbReference type="InterPro" id="IPR002016">
    <property type="entry name" value="Haem_peroxidase"/>
</dbReference>
<dbReference type="InterPro" id="IPR010255">
    <property type="entry name" value="Haem_peroxidase_sf"/>
</dbReference>
<dbReference type="InterPro" id="IPR019794">
    <property type="entry name" value="Peroxidases_AS"/>
</dbReference>
<dbReference type="InterPro" id="IPR019793">
    <property type="entry name" value="Peroxidases_heam-ligand_BS"/>
</dbReference>
<dbReference type="NCBIfam" id="TIGR00198">
    <property type="entry name" value="cat_per_HPI"/>
    <property type="match status" value="1"/>
</dbReference>
<dbReference type="NCBIfam" id="NF011635">
    <property type="entry name" value="PRK15061.1"/>
    <property type="match status" value="1"/>
</dbReference>
<dbReference type="PANTHER" id="PTHR30555:SF0">
    <property type="entry name" value="CATALASE-PEROXIDASE"/>
    <property type="match status" value="1"/>
</dbReference>
<dbReference type="PANTHER" id="PTHR30555">
    <property type="entry name" value="HYDROPEROXIDASE I, BIFUNCTIONAL CATALASE-PEROXIDASE"/>
    <property type="match status" value="1"/>
</dbReference>
<dbReference type="Pfam" id="PF00141">
    <property type="entry name" value="peroxidase"/>
    <property type="match status" value="2"/>
</dbReference>
<dbReference type="PRINTS" id="PR00460">
    <property type="entry name" value="BPEROXIDASE"/>
</dbReference>
<dbReference type="PRINTS" id="PR00458">
    <property type="entry name" value="PEROXIDASE"/>
</dbReference>
<dbReference type="SUPFAM" id="SSF48113">
    <property type="entry name" value="Heme-dependent peroxidases"/>
    <property type="match status" value="2"/>
</dbReference>
<dbReference type="PROSITE" id="PS00435">
    <property type="entry name" value="PEROXIDASE_1"/>
    <property type="match status" value="1"/>
</dbReference>
<dbReference type="PROSITE" id="PS00436">
    <property type="entry name" value="PEROXIDASE_2"/>
    <property type="match status" value="1"/>
</dbReference>
<feature type="chain" id="PRO_0000354869" description="Catalase-peroxidase">
    <location>
        <begin position="1"/>
        <end position="752"/>
    </location>
</feature>
<feature type="region of interest" description="Disordered" evidence="2">
    <location>
        <begin position="1"/>
        <end position="21"/>
    </location>
</feature>
<feature type="region of interest" description="Disordered" evidence="2">
    <location>
        <begin position="204"/>
        <end position="228"/>
    </location>
</feature>
<feature type="region of interest" description="Disordered" evidence="2">
    <location>
        <begin position="366"/>
        <end position="391"/>
    </location>
</feature>
<feature type="compositionally biased region" description="Basic and acidic residues" evidence="2">
    <location>
        <begin position="215"/>
        <end position="228"/>
    </location>
</feature>
<feature type="active site" description="Proton acceptor" evidence="1">
    <location>
        <position position="92"/>
    </location>
</feature>
<feature type="binding site" description="axial binding residue" evidence="1">
    <location>
        <position position="286"/>
    </location>
    <ligand>
        <name>heme</name>
        <dbReference type="ChEBI" id="CHEBI:30413"/>
    </ligand>
    <ligandPart>
        <name>Fe</name>
        <dbReference type="ChEBI" id="CHEBI:18248"/>
    </ligandPart>
</feature>
<feature type="site" description="Transition state stabilizer" evidence="1">
    <location>
        <position position="88"/>
    </location>
</feature>
<feature type="cross-link" description="Tryptophyl-tyrosyl-methioninium (Trp-Tyr) (with M-271)" evidence="1">
    <location>
        <begin position="91"/>
        <end position="245"/>
    </location>
</feature>
<feature type="cross-link" description="Tryptophyl-tyrosyl-methioninium (Tyr-Met) (with W-91)" evidence="1">
    <location>
        <begin position="245"/>
        <end position="271"/>
    </location>
</feature>
<evidence type="ECO:0000255" key="1">
    <source>
        <dbReference type="HAMAP-Rule" id="MF_01961"/>
    </source>
</evidence>
<evidence type="ECO:0000256" key="2">
    <source>
        <dbReference type="SAM" id="MobiDB-lite"/>
    </source>
</evidence>
<reference key="1">
    <citation type="submission" date="2008-02" db="EMBL/GenBank/DDBJ databases">
        <title>Complete sequence of Pseudomonas putida W619.</title>
        <authorList>
            <person name="Copeland A."/>
            <person name="Lucas S."/>
            <person name="Lapidus A."/>
            <person name="Barry K."/>
            <person name="Detter J.C."/>
            <person name="Glavina del Rio T."/>
            <person name="Dalin E."/>
            <person name="Tice H."/>
            <person name="Pitluck S."/>
            <person name="Chain P."/>
            <person name="Malfatti S."/>
            <person name="Shin M."/>
            <person name="Vergez L."/>
            <person name="Schmutz J."/>
            <person name="Larimer F."/>
            <person name="Land M."/>
            <person name="Hauser L."/>
            <person name="Kyrpides N."/>
            <person name="Kim E."/>
            <person name="Taghavi S."/>
            <person name="Vangronsveld D."/>
            <person name="van der Lelie D."/>
            <person name="Richardson P."/>
        </authorList>
    </citation>
    <scope>NUCLEOTIDE SEQUENCE [LARGE SCALE GENOMIC DNA]</scope>
    <source>
        <strain>W619</strain>
    </source>
</reference>
<name>KATG_PSEPW</name>
<gene>
    <name evidence="1" type="primary">katG</name>
    <name type="ordered locus">PputW619_2235</name>
</gene>
<accession>B1J7Q1</accession>
<keyword id="KW-0349">Heme</keyword>
<keyword id="KW-0376">Hydrogen peroxide</keyword>
<keyword id="KW-0408">Iron</keyword>
<keyword id="KW-0479">Metal-binding</keyword>
<keyword id="KW-0560">Oxidoreductase</keyword>
<keyword id="KW-0575">Peroxidase</keyword>